<feature type="initiator methionine" description="Removed" evidence="2">
    <location>
        <position position="1"/>
    </location>
</feature>
<feature type="chain" id="PRO_0000213859" description="Sorting nexin-12">
    <location>
        <begin position="2"/>
        <end position="165"/>
    </location>
</feature>
<feature type="domain" description="PX" evidence="3">
    <location>
        <begin position="28"/>
        <end position="151"/>
    </location>
</feature>
<feature type="region of interest" description="Disordered" evidence="4">
    <location>
        <begin position="1"/>
        <end position="20"/>
    </location>
</feature>
<feature type="binding site" evidence="1">
    <location>
        <position position="71"/>
    </location>
    <ligand>
        <name>a 1,2-diacyl-sn-glycero-3-phospho-(1D-myo-inositol-3-phosphate)</name>
        <dbReference type="ChEBI" id="CHEBI:58088"/>
    </ligand>
</feature>
<feature type="binding site" evidence="1">
    <location>
        <position position="73"/>
    </location>
    <ligand>
        <name>a 1,2-diacyl-sn-glycero-3-phospho-(1D-myo-inositol-3-phosphate)</name>
        <dbReference type="ChEBI" id="CHEBI:58088"/>
    </ligand>
</feature>
<feature type="binding site" evidence="1">
    <location>
        <position position="96"/>
    </location>
    <ligand>
        <name>a 1,2-diacyl-sn-glycero-3-phospho-(1D-myo-inositol-3-phosphate)</name>
        <dbReference type="ChEBI" id="CHEBI:58088"/>
    </ligand>
</feature>
<feature type="binding site" evidence="1">
    <location>
        <position position="118"/>
    </location>
    <ligand>
        <name>a 1,2-diacyl-sn-glycero-3-phospho-(1D-myo-inositol-3-phosphate)</name>
        <dbReference type="ChEBI" id="CHEBI:58088"/>
    </ligand>
</feature>
<feature type="modified residue" description="N-acetylserine" evidence="2">
    <location>
        <position position="2"/>
    </location>
</feature>
<feature type="modified residue" description="Phosphotyrosine" evidence="2">
    <location>
        <position position="23"/>
    </location>
</feature>
<feature type="modified residue" description="Phosphoserine" evidence="6 7">
    <location>
        <position position="73"/>
    </location>
</feature>
<feature type="sequence conflict" description="In Ref. 2; BAB27499." evidence="5" ref="2">
    <original>H</original>
    <variation>QL</variation>
    <location>
        <position position="101"/>
    </location>
</feature>
<feature type="sequence conflict" description="In Ref. 2; BAB27499." evidence="5" ref="2">
    <original>A</original>
    <variation>P</variation>
    <location>
        <position position="156"/>
    </location>
</feature>
<gene>
    <name type="primary">Snx12</name>
</gene>
<protein>
    <recommendedName>
        <fullName>Sorting nexin-12</fullName>
    </recommendedName>
    <alternativeName>
        <fullName>SDP8 protein</fullName>
    </alternativeName>
</protein>
<proteinExistence type="evidence at protein level"/>
<accession>O70493</accession>
<accession>Q9D0N3</accession>
<keyword id="KW-0007">Acetylation</keyword>
<keyword id="KW-0446">Lipid-binding</keyword>
<keyword id="KW-0472">Membrane</keyword>
<keyword id="KW-0597">Phosphoprotein</keyword>
<keyword id="KW-0653">Protein transport</keyword>
<keyword id="KW-1185">Reference proteome</keyword>
<keyword id="KW-0813">Transport</keyword>
<sequence length="165" mass="19116">MSDTAVADTRRLNSKPQDLTDAYGPPSNFLEIDIFNPQTVGVGRARFTTYEVRMRTNLPIFKLKESCVRRRYSDFEWLKNELERDSKIVVPPLPGKALKRHPFRGDEGIFEESFIEERRQGLEQFINKIAGHPLAQNERCLHMFLQEEAIDRNYVAGKVLGEKDC</sequence>
<name>SNX12_MOUSE</name>
<reference key="1">
    <citation type="submission" date="1998-05" db="EMBL/GenBank/DDBJ databases">
        <authorList>
            <person name="Xu Y."/>
            <person name="Wong S.H."/>
            <person name="Zhang T."/>
            <person name="Hong W."/>
        </authorList>
    </citation>
    <scope>NUCLEOTIDE SEQUENCE [MRNA]</scope>
</reference>
<reference key="2">
    <citation type="journal article" date="2005" name="Science">
        <title>The transcriptional landscape of the mammalian genome.</title>
        <authorList>
            <person name="Carninci P."/>
            <person name="Kasukawa T."/>
            <person name="Katayama S."/>
            <person name="Gough J."/>
            <person name="Frith M.C."/>
            <person name="Maeda N."/>
            <person name="Oyama R."/>
            <person name="Ravasi T."/>
            <person name="Lenhard B."/>
            <person name="Wells C."/>
            <person name="Kodzius R."/>
            <person name="Shimokawa K."/>
            <person name="Bajic V.B."/>
            <person name="Brenner S.E."/>
            <person name="Batalov S."/>
            <person name="Forrest A.R."/>
            <person name="Zavolan M."/>
            <person name="Davis M.J."/>
            <person name="Wilming L.G."/>
            <person name="Aidinis V."/>
            <person name="Allen J.E."/>
            <person name="Ambesi-Impiombato A."/>
            <person name="Apweiler R."/>
            <person name="Aturaliya R.N."/>
            <person name="Bailey T.L."/>
            <person name="Bansal M."/>
            <person name="Baxter L."/>
            <person name="Beisel K.W."/>
            <person name="Bersano T."/>
            <person name="Bono H."/>
            <person name="Chalk A.M."/>
            <person name="Chiu K.P."/>
            <person name="Choudhary V."/>
            <person name="Christoffels A."/>
            <person name="Clutterbuck D.R."/>
            <person name="Crowe M.L."/>
            <person name="Dalla E."/>
            <person name="Dalrymple B.P."/>
            <person name="de Bono B."/>
            <person name="Della Gatta G."/>
            <person name="di Bernardo D."/>
            <person name="Down T."/>
            <person name="Engstrom P."/>
            <person name="Fagiolini M."/>
            <person name="Faulkner G."/>
            <person name="Fletcher C.F."/>
            <person name="Fukushima T."/>
            <person name="Furuno M."/>
            <person name="Futaki S."/>
            <person name="Gariboldi M."/>
            <person name="Georgii-Hemming P."/>
            <person name="Gingeras T.R."/>
            <person name="Gojobori T."/>
            <person name="Green R.E."/>
            <person name="Gustincich S."/>
            <person name="Harbers M."/>
            <person name="Hayashi Y."/>
            <person name="Hensch T.K."/>
            <person name="Hirokawa N."/>
            <person name="Hill D."/>
            <person name="Huminiecki L."/>
            <person name="Iacono M."/>
            <person name="Ikeo K."/>
            <person name="Iwama A."/>
            <person name="Ishikawa T."/>
            <person name="Jakt M."/>
            <person name="Kanapin A."/>
            <person name="Katoh M."/>
            <person name="Kawasawa Y."/>
            <person name="Kelso J."/>
            <person name="Kitamura H."/>
            <person name="Kitano H."/>
            <person name="Kollias G."/>
            <person name="Krishnan S.P."/>
            <person name="Kruger A."/>
            <person name="Kummerfeld S.K."/>
            <person name="Kurochkin I.V."/>
            <person name="Lareau L.F."/>
            <person name="Lazarevic D."/>
            <person name="Lipovich L."/>
            <person name="Liu J."/>
            <person name="Liuni S."/>
            <person name="McWilliam S."/>
            <person name="Madan Babu M."/>
            <person name="Madera M."/>
            <person name="Marchionni L."/>
            <person name="Matsuda H."/>
            <person name="Matsuzawa S."/>
            <person name="Miki H."/>
            <person name="Mignone F."/>
            <person name="Miyake S."/>
            <person name="Morris K."/>
            <person name="Mottagui-Tabar S."/>
            <person name="Mulder N."/>
            <person name="Nakano N."/>
            <person name="Nakauchi H."/>
            <person name="Ng P."/>
            <person name="Nilsson R."/>
            <person name="Nishiguchi S."/>
            <person name="Nishikawa S."/>
            <person name="Nori F."/>
            <person name="Ohara O."/>
            <person name="Okazaki Y."/>
            <person name="Orlando V."/>
            <person name="Pang K.C."/>
            <person name="Pavan W.J."/>
            <person name="Pavesi G."/>
            <person name="Pesole G."/>
            <person name="Petrovsky N."/>
            <person name="Piazza S."/>
            <person name="Reed J."/>
            <person name="Reid J.F."/>
            <person name="Ring B.Z."/>
            <person name="Ringwald M."/>
            <person name="Rost B."/>
            <person name="Ruan Y."/>
            <person name="Salzberg S.L."/>
            <person name="Sandelin A."/>
            <person name="Schneider C."/>
            <person name="Schoenbach C."/>
            <person name="Sekiguchi K."/>
            <person name="Semple C.A."/>
            <person name="Seno S."/>
            <person name="Sessa L."/>
            <person name="Sheng Y."/>
            <person name="Shibata Y."/>
            <person name="Shimada H."/>
            <person name="Shimada K."/>
            <person name="Silva D."/>
            <person name="Sinclair B."/>
            <person name="Sperling S."/>
            <person name="Stupka E."/>
            <person name="Sugiura K."/>
            <person name="Sultana R."/>
            <person name="Takenaka Y."/>
            <person name="Taki K."/>
            <person name="Tammoja K."/>
            <person name="Tan S.L."/>
            <person name="Tang S."/>
            <person name="Taylor M.S."/>
            <person name="Tegner J."/>
            <person name="Teichmann S.A."/>
            <person name="Ueda H.R."/>
            <person name="van Nimwegen E."/>
            <person name="Verardo R."/>
            <person name="Wei C.L."/>
            <person name="Yagi K."/>
            <person name="Yamanishi H."/>
            <person name="Zabarovsky E."/>
            <person name="Zhu S."/>
            <person name="Zimmer A."/>
            <person name="Hide W."/>
            <person name="Bult C."/>
            <person name="Grimmond S.M."/>
            <person name="Teasdale R.D."/>
            <person name="Liu E.T."/>
            <person name="Brusic V."/>
            <person name="Quackenbush J."/>
            <person name="Wahlestedt C."/>
            <person name="Mattick J.S."/>
            <person name="Hume D.A."/>
            <person name="Kai C."/>
            <person name="Sasaki D."/>
            <person name="Tomaru Y."/>
            <person name="Fukuda S."/>
            <person name="Kanamori-Katayama M."/>
            <person name="Suzuki M."/>
            <person name="Aoki J."/>
            <person name="Arakawa T."/>
            <person name="Iida J."/>
            <person name="Imamura K."/>
            <person name="Itoh M."/>
            <person name="Kato T."/>
            <person name="Kawaji H."/>
            <person name="Kawagashira N."/>
            <person name="Kawashima T."/>
            <person name="Kojima M."/>
            <person name="Kondo S."/>
            <person name="Konno H."/>
            <person name="Nakano K."/>
            <person name="Ninomiya N."/>
            <person name="Nishio T."/>
            <person name="Okada M."/>
            <person name="Plessy C."/>
            <person name="Shibata K."/>
            <person name="Shiraki T."/>
            <person name="Suzuki S."/>
            <person name="Tagami M."/>
            <person name="Waki K."/>
            <person name="Watahiki A."/>
            <person name="Okamura-Oho Y."/>
            <person name="Suzuki H."/>
            <person name="Kawai J."/>
            <person name="Hayashizaki Y."/>
        </authorList>
    </citation>
    <scope>NUCLEOTIDE SEQUENCE [LARGE SCALE MRNA]</scope>
    <source>
        <strain>C57BL/6J</strain>
        <tissue>Embryo</tissue>
    </source>
</reference>
<reference key="3">
    <citation type="journal article" date="2007" name="Proc. Natl. Acad. Sci. U.S.A.">
        <title>Large-scale phosphorylation analysis of mouse liver.</title>
        <authorList>
            <person name="Villen J."/>
            <person name="Beausoleil S.A."/>
            <person name="Gerber S.A."/>
            <person name="Gygi S.P."/>
        </authorList>
    </citation>
    <scope>PHOSPHORYLATION [LARGE SCALE ANALYSIS] AT SER-73</scope>
    <scope>IDENTIFICATION BY MASS SPECTROMETRY [LARGE SCALE ANALYSIS]</scope>
    <source>
        <tissue>Liver</tissue>
    </source>
</reference>
<reference key="4">
    <citation type="journal article" date="2009" name="Mol. Cell. Proteomics">
        <title>Large scale localization of protein phosphorylation by use of electron capture dissociation mass spectrometry.</title>
        <authorList>
            <person name="Sweet S.M."/>
            <person name="Bailey C.M."/>
            <person name="Cunningham D.L."/>
            <person name="Heath J.K."/>
            <person name="Cooper H.J."/>
        </authorList>
    </citation>
    <scope>IDENTIFICATION BY MASS SPECTROMETRY [LARGE SCALE ANALYSIS]</scope>
    <source>
        <tissue>Embryonic fibroblast</tissue>
    </source>
</reference>
<reference key="5">
    <citation type="journal article" date="2010" name="Cell">
        <title>A tissue-specific atlas of mouse protein phosphorylation and expression.</title>
        <authorList>
            <person name="Huttlin E.L."/>
            <person name="Jedrychowski M.P."/>
            <person name="Elias J.E."/>
            <person name="Goswami T."/>
            <person name="Rad R."/>
            <person name="Beausoleil S.A."/>
            <person name="Villen J."/>
            <person name="Haas W."/>
            <person name="Sowa M.E."/>
            <person name="Gygi S.P."/>
        </authorList>
    </citation>
    <scope>PHOSPHORYLATION [LARGE SCALE ANALYSIS] AT SER-73</scope>
    <scope>IDENTIFICATION BY MASS SPECTROMETRY [LARGE SCALE ANALYSIS]</scope>
    <source>
        <tissue>Brain</tissue>
        <tissue>Brown adipose tissue</tissue>
        <tissue>Heart</tissue>
        <tissue>Kidney</tissue>
        <tissue>Liver</tissue>
        <tissue>Lung</tissue>
        <tissue>Pancreas</tissue>
        <tissue>Spleen</tissue>
        <tissue>Testis</tissue>
    </source>
</reference>
<dbReference type="EMBL" id="AF062484">
    <property type="protein sequence ID" value="AAC16019.1"/>
    <property type="molecule type" value="mRNA"/>
</dbReference>
<dbReference type="EMBL" id="AK011257">
    <property type="protein sequence ID" value="BAB27499.1"/>
    <property type="molecule type" value="mRNA"/>
</dbReference>
<dbReference type="RefSeq" id="NP_061363.2">
    <property type="nucleotide sequence ID" value="NM_018875.2"/>
</dbReference>
<dbReference type="SMR" id="O70493"/>
<dbReference type="BioGRID" id="207759">
    <property type="interactions" value="5"/>
</dbReference>
<dbReference type="FunCoup" id="O70493">
    <property type="interactions" value="2335"/>
</dbReference>
<dbReference type="STRING" id="10090.ENSMUSP00000119102"/>
<dbReference type="iPTMnet" id="O70493"/>
<dbReference type="PhosphoSitePlus" id="O70493"/>
<dbReference type="SwissPalm" id="O70493"/>
<dbReference type="REPRODUCTION-2DPAGE" id="O70493"/>
<dbReference type="jPOST" id="O70493"/>
<dbReference type="PaxDb" id="10090-ENSMUSP00000119102"/>
<dbReference type="PeptideAtlas" id="O70493"/>
<dbReference type="ProteomicsDB" id="261301"/>
<dbReference type="Pumba" id="O70493"/>
<dbReference type="DNASU" id="55988"/>
<dbReference type="GeneID" id="55988"/>
<dbReference type="KEGG" id="mmu:55988"/>
<dbReference type="AGR" id="MGI:1919331"/>
<dbReference type="CTD" id="29934"/>
<dbReference type="MGI" id="MGI:1919331">
    <property type="gene designation" value="Snx12"/>
</dbReference>
<dbReference type="eggNOG" id="KOG2527">
    <property type="taxonomic scope" value="Eukaryota"/>
</dbReference>
<dbReference type="InParanoid" id="O70493"/>
<dbReference type="OrthoDB" id="5227681at2759"/>
<dbReference type="BioGRID-ORCS" id="55988">
    <property type="hits" value="1 hit in 80 CRISPR screens"/>
</dbReference>
<dbReference type="ChiTaRS" id="Snx12">
    <property type="organism name" value="mouse"/>
</dbReference>
<dbReference type="PRO" id="PR:O70493"/>
<dbReference type="Proteomes" id="UP000000589">
    <property type="component" value="Unplaced"/>
</dbReference>
<dbReference type="RNAct" id="O70493">
    <property type="molecule type" value="protein"/>
</dbReference>
<dbReference type="GO" id="GO:0016020">
    <property type="term" value="C:membrane"/>
    <property type="evidence" value="ECO:0007669"/>
    <property type="project" value="UniProtKB-SubCell"/>
</dbReference>
<dbReference type="GO" id="GO:0035091">
    <property type="term" value="F:phosphatidylinositol binding"/>
    <property type="evidence" value="ECO:0007669"/>
    <property type="project" value="InterPro"/>
</dbReference>
<dbReference type="GO" id="GO:0015031">
    <property type="term" value="P:protein transport"/>
    <property type="evidence" value="ECO:0007669"/>
    <property type="project" value="UniProtKB-KW"/>
</dbReference>
<dbReference type="FunFam" id="3.30.1520.10:FF:000002">
    <property type="entry name" value="Sorting nexin 12"/>
    <property type="match status" value="1"/>
</dbReference>
<dbReference type="Gene3D" id="3.30.1520.10">
    <property type="entry name" value="Phox-like domain"/>
    <property type="match status" value="1"/>
</dbReference>
<dbReference type="InterPro" id="IPR001683">
    <property type="entry name" value="PX_dom"/>
</dbReference>
<dbReference type="InterPro" id="IPR036871">
    <property type="entry name" value="PX_dom_sf"/>
</dbReference>
<dbReference type="InterPro" id="IPR051074">
    <property type="entry name" value="Sorting_Nexin"/>
</dbReference>
<dbReference type="PANTHER" id="PTHR45963">
    <property type="entry name" value="RE52028P"/>
    <property type="match status" value="1"/>
</dbReference>
<dbReference type="PANTHER" id="PTHR45963:SF3">
    <property type="entry name" value="SORTING NEXIN-12"/>
    <property type="match status" value="1"/>
</dbReference>
<dbReference type="Pfam" id="PF00787">
    <property type="entry name" value="PX"/>
    <property type="match status" value="1"/>
</dbReference>
<dbReference type="SMART" id="SM00312">
    <property type="entry name" value="PX"/>
    <property type="match status" value="1"/>
</dbReference>
<dbReference type="SUPFAM" id="SSF64268">
    <property type="entry name" value="PX domain"/>
    <property type="match status" value="1"/>
</dbReference>
<dbReference type="PROSITE" id="PS50195">
    <property type="entry name" value="PX"/>
    <property type="match status" value="1"/>
</dbReference>
<evidence type="ECO:0000250" key="1"/>
<evidence type="ECO:0000250" key="2">
    <source>
        <dbReference type="UniProtKB" id="Q9UMY4"/>
    </source>
</evidence>
<evidence type="ECO:0000255" key="3">
    <source>
        <dbReference type="PROSITE-ProRule" id="PRU00147"/>
    </source>
</evidence>
<evidence type="ECO:0000256" key="4">
    <source>
        <dbReference type="SAM" id="MobiDB-lite"/>
    </source>
</evidence>
<evidence type="ECO:0000305" key="5"/>
<evidence type="ECO:0007744" key="6">
    <source>
    </source>
</evidence>
<evidence type="ECO:0007744" key="7">
    <source>
    </source>
</evidence>
<organism>
    <name type="scientific">Mus musculus</name>
    <name type="common">Mouse</name>
    <dbReference type="NCBI Taxonomy" id="10090"/>
    <lineage>
        <taxon>Eukaryota</taxon>
        <taxon>Metazoa</taxon>
        <taxon>Chordata</taxon>
        <taxon>Craniata</taxon>
        <taxon>Vertebrata</taxon>
        <taxon>Euteleostomi</taxon>
        <taxon>Mammalia</taxon>
        <taxon>Eutheria</taxon>
        <taxon>Euarchontoglires</taxon>
        <taxon>Glires</taxon>
        <taxon>Rodentia</taxon>
        <taxon>Myomorpha</taxon>
        <taxon>Muroidea</taxon>
        <taxon>Muridae</taxon>
        <taxon>Murinae</taxon>
        <taxon>Mus</taxon>
        <taxon>Mus</taxon>
    </lineage>
</organism>
<comment type="function">
    <text evidence="1">May be involved in several stages of intracellular trafficking.</text>
</comment>
<comment type="subcellular location">
    <subcellularLocation>
        <location evidence="5">Membrane</location>
        <topology evidence="5">Peripheral membrane protein</topology>
        <orientation evidence="5">Cytoplasmic side</orientation>
    </subcellularLocation>
</comment>
<comment type="domain">
    <text evidence="1">The PX domain mediates interaction with membranes enriched in phosphatidylinositol 3-phosphate.</text>
</comment>
<comment type="similarity">
    <text evidence="5">Belongs to the sorting nexin family.</text>
</comment>